<evidence type="ECO:0000250" key="1">
    <source>
        <dbReference type="UniProtKB" id="Q9W415"/>
    </source>
</evidence>
<evidence type="ECO:0000255" key="2">
    <source>
        <dbReference type="HAMAP-Rule" id="MF_03056"/>
    </source>
</evidence>
<comment type="function">
    <text evidence="1 2">Required for the Mettl1-dependent formation of N(7)-methylguanine at position 46 (m7G46) in tRNA (By similarity). In the Mettl1-wuho methyltransferase complex, it is required to stabilize and induce conformational changes of the catalytic subunit (By similarity). Required for binding of nanos mRNA and repression of translation by the mei-P26-bgcn-bam-sxl complex. May cooperate with mei-P26 and nanos to derepress the BMP signaling pathway. May cooperate with mei-P26 to suppress expression of a subset of microRNAs. May cooperate with mei-P26 to regulate bam expression levels in germline cells during gametogenesis. Required to promote mitosis to meiosis transition during gametogenesis. May regulate germline cell division in part by regulating ribosome biogenesis (By similarity).</text>
</comment>
<comment type="pathway">
    <text evidence="2">tRNA modification; N(7)-methylguanine-tRNA biosynthesis.</text>
</comment>
<comment type="subunit">
    <text evidence="1 2">Forms a heterodimer with the catalytic subunit Mettl1 (By similarity). Interacts with mei-P26 and weakly interacts with bgcn; required for the function or formation of the mei-P26-bgcn-bam-sxl complex. Interacts with nanos; may be involved in mei-P26-dependent derepression of the BMP signaling pathway. Interacts with Myc; the interaction may be mediated by mei-P26 and may be involved in the regulation of ribosome biogenesis (By similarity).</text>
</comment>
<comment type="subcellular location">
    <subcellularLocation>
        <location evidence="1 2">Nucleus</location>
    </subcellularLocation>
    <subcellularLocation>
        <location evidence="1">Cytoplasm</location>
    </subcellularLocation>
    <text evidence="1">Localized to the nuclei of nurse cells, follicle cells and oocytes at early stages, from germarium to stage 4 egg chambers. Also present in the nuclei of spermatocytes and in the apical cells of the testes. In the cytoplasm of all germline and somatic cells of the ovary.</text>
</comment>
<comment type="tissue specificity">
    <text evidence="1">In testis, it is present at high level in hub cells, a niche for germline stem cells of testis. Ubiquitously expressed in all testicular cells throughout spermatogenesis. Ubiquitously expressed in all germline and somatic cells of the ovary.</text>
</comment>
<comment type="miscellaneous">
    <text evidence="1">Wuho means 'no progeny' in Chinese.</text>
</comment>
<comment type="similarity">
    <text evidence="2">Belongs to the WD repeat TRM82 family.</text>
</comment>
<keyword id="KW-0963">Cytoplasm</keyword>
<keyword id="KW-0217">Developmental protein</keyword>
<keyword id="KW-0221">Differentiation</keyword>
<keyword id="KW-0539">Nucleus</keyword>
<keyword id="KW-0896">Oogenesis</keyword>
<keyword id="KW-1185">Reference proteome</keyword>
<keyword id="KW-0677">Repeat</keyword>
<keyword id="KW-0744">Spermatogenesis</keyword>
<keyword id="KW-0819">tRNA processing</keyword>
<keyword id="KW-0853">WD repeat</keyword>
<name>WUHO_DROPE</name>
<organism>
    <name type="scientific">Drosophila persimilis</name>
    <name type="common">Fruit fly</name>
    <dbReference type="NCBI Taxonomy" id="7234"/>
    <lineage>
        <taxon>Eukaryota</taxon>
        <taxon>Metazoa</taxon>
        <taxon>Ecdysozoa</taxon>
        <taxon>Arthropoda</taxon>
        <taxon>Hexapoda</taxon>
        <taxon>Insecta</taxon>
        <taxon>Pterygota</taxon>
        <taxon>Neoptera</taxon>
        <taxon>Endopterygota</taxon>
        <taxon>Diptera</taxon>
        <taxon>Brachycera</taxon>
        <taxon>Muscomorpha</taxon>
        <taxon>Ephydroidea</taxon>
        <taxon>Drosophilidae</taxon>
        <taxon>Drosophila</taxon>
        <taxon>Sophophora</taxon>
    </lineage>
</organism>
<accession>B4GXH4</accession>
<feature type="chain" id="PRO_0000370547" description="tRNA (guanine-N(7)-)-methyltransferase non-catalytic subunit wuho">
    <location>
        <begin position="1"/>
        <end position="397"/>
    </location>
</feature>
<feature type="repeat" description="WD 1">
    <location>
        <begin position="75"/>
        <end position="115"/>
    </location>
</feature>
<feature type="repeat" description="WD 2">
    <location>
        <begin position="163"/>
        <end position="202"/>
    </location>
</feature>
<feature type="repeat" description="WD 3">
    <location>
        <begin position="206"/>
        <end position="244"/>
    </location>
</feature>
<feature type="repeat" description="WD 4">
    <location>
        <begin position="303"/>
        <end position="343"/>
    </location>
</feature>
<reference key="1">
    <citation type="journal article" date="2007" name="Nature">
        <title>Evolution of genes and genomes on the Drosophila phylogeny.</title>
        <authorList>
            <consortium name="Drosophila 12 genomes consortium"/>
        </authorList>
    </citation>
    <scope>NUCLEOTIDE SEQUENCE [LARGE SCALE GENOMIC DNA]</scope>
    <source>
        <strain>MSH-3 / Tucson 14011-0111.49</strain>
    </source>
</reference>
<protein>
    <recommendedName>
        <fullName evidence="2">tRNA (guanine-N(7)-)-methyltransferase non-catalytic subunit wuho</fullName>
    </recommendedName>
</protein>
<gene>
    <name evidence="2" type="primary">wuho</name>
    <name type="ORF">GL20260</name>
</gene>
<dbReference type="EMBL" id="CH479196">
    <property type="protein sequence ID" value="EDW27451.1"/>
    <property type="molecule type" value="Genomic_DNA"/>
</dbReference>
<dbReference type="RefSeq" id="XP_002023303.1">
    <property type="nucleotide sequence ID" value="XM_002023267.1"/>
</dbReference>
<dbReference type="STRING" id="7234.B4GXH4"/>
<dbReference type="EnsemblMetazoa" id="FBtr0185875">
    <property type="protein sequence ID" value="FBpp0184367"/>
    <property type="gene ID" value="FBgn0157855"/>
</dbReference>
<dbReference type="GeneID" id="6598280"/>
<dbReference type="KEGG" id="dpe:6598280"/>
<dbReference type="CTD" id="31566"/>
<dbReference type="eggNOG" id="KOG3914">
    <property type="taxonomic scope" value="Eukaryota"/>
</dbReference>
<dbReference type="HOGENOM" id="CLU_054270_0_0_1"/>
<dbReference type="OMA" id="SVWFKKR"/>
<dbReference type="OrthoDB" id="371245at2759"/>
<dbReference type="PhylomeDB" id="B4GXH4"/>
<dbReference type="UniPathway" id="UPA00989"/>
<dbReference type="Proteomes" id="UP000008744">
    <property type="component" value="Unassembled WGS sequence"/>
</dbReference>
<dbReference type="GO" id="GO:0005829">
    <property type="term" value="C:cytosol"/>
    <property type="evidence" value="ECO:0007669"/>
    <property type="project" value="TreeGrafter"/>
</dbReference>
<dbReference type="GO" id="GO:0001674">
    <property type="term" value="C:female germ cell nucleus"/>
    <property type="evidence" value="ECO:0000250"/>
    <property type="project" value="UniProtKB"/>
</dbReference>
<dbReference type="GO" id="GO:0001673">
    <property type="term" value="C:male germ cell nucleus"/>
    <property type="evidence" value="ECO:0000250"/>
    <property type="project" value="UniProtKB"/>
</dbReference>
<dbReference type="GO" id="GO:0005634">
    <property type="term" value="C:nucleus"/>
    <property type="evidence" value="ECO:0000250"/>
    <property type="project" value="UniProtKB"/>
</dbReference>
<dbReference type="GO" id="GO:0043527">
    <property type="term" value="C:tRNA methyltransferase complex"/>
    <property type="evidence" value="ECO:0007669"/>
    <property type="project" value="TreeGrafter"/>
</dbReference>
<dbReference type="GO" id="GO:0048477">
    <property type="term" value="P:oogenesis"/>
    <property type="evidence" value="ECO:0000250"/>
    <property type="project" value="UniProtKB"/>
</dbReference>
<dbReference type="GO" id="GO:0007283">
    <property type="term" value="P:spermatogenesis"/>
    <property type="evidence" value="ECO:0000250"/>
    <property type="project" value="UniProtKB"/>
</dbReference>
<dbReference type="GO" id="GO:0106004">
    <property type="term" value="P:tRNA (guanine-N7)-methylation"/>
    <property type="evidence" value="ECO:0007669"/>
    <property type="project" value="UniProtKB-UniRule"/>
</dbReference>
<dbReference type="Gene3D" id="2.130.10.10">
    <property type="entry name" value="YVTN repeat-like/Quinoprotein amine dehydrogenase"/>
    <property type="match status" value="1"/>
</dbReference>
<dbReference type="HAMAP" id="MF_03056">
    <property type="entry name" value="TRM82"/>
    <property type="match status" value="1"/>
</dbReference>
<dbReference type="InterPro" id="IPR028884">
    <property type="entry name" value="Trm82"/>
</dbReference>
<dbReference type="InterPro" id="IPR015943">
    <property type="entry name" value="WD40/YVTN_repeat-like_dom_sf"/>
</dbReference>
<dbReference type="InterPro" id="IPR036322">
    <property type="entry name" value="WD40_repeat_dom_sf"/>
</dbReference>
<dbReference type="InterPro" id="IPR001680">
    <property type="entry name" value="WD40_rpt"/>
</dbReference>
<dbReference type="PANTHER" id="PTHR16288:SF0">
    <property type="entry name" value="TRNA (GUANINE-N(7)-)-METHYLTRANSFERASE NON-CATALYTIC SUBUNIT WDR4"/>
    <property type="match status" value="1"/>
</dbReference>
<dbReference type="PANTHER" id="PTHR16288">
    <property type="entry name" value="WD40 REPEAT PROTEIN 4"/>
    <property type="match status" value="1"/>
</dbReference>
<dbReference type="Pfam" id="PF00400">
    <property type="entry name" value="WD40"/>
    <property type="match status" value="2"/>
</dbReference>
<dbReference type="SMART" id="SM00320">
    <property type="entry name" value="WD40"/>
    <property type="match status" value="2"/>
</dbReference>
<dbReference type="SUPFAM" id="SSF50978">
    <property type="entry name" value="WD40 repeat-like"/>
    <property type="match status" value="1"/>
</dbReference>
<dbReference type="PROSITE" id="PS50082">
    <property type="entry name" value="WD_REPEATS_2"/>
    <property type="match status" value="1"/>
</dbReference>
<dbReference type="PROSITE" id="PS50294">
    <property type="entry name" value="WD_REPEATS_REGION"/>
    <property type="match status" value="1"/>
</dbReference>
<sequence length="397" mass="45135">MATIFFAEPELVIGHGRKVLFLNPGDLQIFKEIELPPDLTTCGLKTVEPVPAPGHPASSSKQQPAALKEATGSVKVEVSIQNVTYSPDRQLLALTTAGQKAVLLYKSRPENAQLLSIRPLARASSAPKVLQRWQLPFWSLTKREIAINTSVLRWMPRHVCFLGHLSIVYDVLWSEDQQYIITCDRDDKIRVTNYPATFDIHSYCLGHKEFVSGLAMLTEQHIISASGDKTLRVWNYTCGKELLLHELPAPAVRMLVRQLEPEKTYEVAVLFYDYVDAIGVYRLEQTTTESWSITSTQLVRAEAGTWNICNFALTDDRIYVTGAENERLTLRVYDSRNGERASGLPEGWLKMVLDNLDVAAFMPEDLSVWFKKRFDNVSDYLERKKRRIEEQKQQKCG</sequence>
<proteinExistence type="inferred from homology"/>